<dbReference type="EMBL" id="X63196">
    <property type="protein sequence ID" value="CAA44879.1"/>
    <property type="molecule type" value="Genomic_DNA"/>
</dbReference>
<dbReference type="PIR" id="S20904">
    <property type="entry name" value="S20904"/>
</dbReference>
<dbReference type="SMR" id="Q10373"/>
<dbReference type="GO" id="GO:0005506">
    <property type="term" value="F:iron ion binding"/>
    <property type="evidence" value="ECO:0007669"/>
    <property type="project" value="InterPro"/>
</dbReference>
<dbReference type="GO" id="GO:0051536">
    <property type="term" value="F:iron-sulfur cluster binding"/>
    <property type="evidence" value="ECO:0007669"/>
    <property type="project" value="InterPro"/>
</dbReference>
<dbReference type="GO" id="GO:0016226">
    <property type="term" value="P:iron-sulfur cluster assembly"/>
    <property type="evidence" value="ECO:0007669"/>
    <property type="project" value="InterPro"/>
</dbReference>
<dbReference type="GO" id="GO:0009399">
    <property type="term" value="P:nitrogen fixation"/>
    <property type="evidence" value="ECO:0007669"/>
    <property type="project" value="UniProtKB-KW"/>
</dbReference>
<dbReference type="Gene3D" id="3.30.300.130">
    <property type="entry name" value="Fe-S cluster assembly (FSCA)"/>
    <property type="match status" value="1"/>
</dbReference>
<dbReference type="InterPro" id="IPR034904">
    <property type="entry name" value="FSCA_dom_sf"/>
</dbReference>
<dbReference type="InterPro" id="IPR001075">
    <property type="entry name" value="NIF_FeS_clus_asmbl_NifU_C"/>
</dbReference>
<dbReference type="PANTHER" id="PTHR11178">
    <property type="entry name" value="IRON-SULFUR CLUSTER SCAFFOLD PROTEIN NFU-RELATED"/>
    <property type="match status" value="1"/>
</dbReference>
<dbReference type="PANTHER" id="PTHR11178:SF1">
    <property type="entry name" value="NFU1 IRON-SULFUR CLUSTER SCAFFOLD HOMOLOG, MITOCHONDRIAL"/>
    <property type="match status" value="1"/>
</dbReference>
<dbReference type="Pfam" id="PF01106">
    <property type="entry name" value="NifU"/>
    <property type="match status" value="1"/>
</dbReference>
<dbReference type="SUPFAM" id="SSF117916">
    <property type="entry name" value="Fe-S cluster assembly (FSCA) domain-like"/>
    <property type="match status" value="1"/>
</dbReference>
<proteinExistence type="inferred from homology"/>
<keyword id="KW-0535">Nitrogen fixation</keyword>
<evidence type="ECO:0000256" key="1">
    <source>
        <dbReference type="SAM" id="MobiDB-lite"/>
    </source>
</evidence>
<evidence type="ECO:0000305" key="2"/>
<feature type="chain" id="PRO_0000166177" description="Nitrogen fixation protein NifU 2">
    <location>
        <begin position="1"/>
        <end position="142"/>
    </location>
</feature>
<feature type="region of interest" description="Disordered" evidence="1">
    <location>
        <begin position="1"/>
        <end position="36"/>
    </location>
</feature>
<feature type="compositionally biased region" description="Low complexity" evidence="1">
    <location>
        <begin position="14"/>
        <end position="23"/>
    </location>
</feature>
<name>NIFU2_RHOCA</name>
<sequence>MKDLFDESLTLDTGSAAPGTAPGRPRRRQPAGGKAPDTAAFLANFVRIGEIAAPKPPAAADVVSEPEEEAAVVAELIAEMRPMFQRDGGDIELIGLTGATVQVRLSGSCAGCMMSARTLSTVQHQLIETLGRPVRVVPEIRH</sequence>
<protein>
    <recommendedName>
        <fullName>Nitrogen fixation protein NifU 2</fullName>
    </recommendedName>
</protein>
<accession>Q10373</accession>
<organism>
    <name type="scientific">Rhodobacter capsulatus</name>
    <name type="common">Rhodopseudomonas capsulata</name>
    <dbReference type="NCBI Taxonomy" id="1061"/>
    <lineage>
        <taxon>Bacteria</taxon>
        <taxon>Pseudomonadati</taxon>
        <taxon>Pseudomonadota</taxon>
        <taxon>Alphaproteobacteria</taxon>
        <taxon>Rhodobacterales</taxon>
        <taxon>Rhodobacter group</taxon>
        <taxon>Rhodobacter</taxon>
    </lineage>
</organism>
<gene>
    <name type="primary">nifU2</name>
    <name type="synonym">nifUII</name>
</gene>
<reference key="1">
    <citation type="journal article" date="1992" name="Mol. Microbiol.">
        <title>Mapping and characterization of the promoter elements of the regulatory nif genes rpoN, nifA1 and nifA2 in Rhodobacter capsulatus.</title>
        <authorList>
            <person name="Preker P."/>
            <person name="Huebner P."/>
            <person name="Schmehl M."/>
            <person name="Klipp W."/>
            <person name="Bickle T.A."/>
        </authorList>
    </citation>
    <scope>NUCLEOTIDE SEQUENCE [GENOMIC DNA]</scope>
    <source>
        <strain>ATCC 33303 / B10</strain>
    </source>
</reference>
<comment type="function">
    <text evidence="2">May be involved in the formation or repair of [Fe-S] clusters present in iron-sulfur proteins.</text>
</comment>
<comment type="similarity">
    <text evidence="2">Belongs to the NifU family.</text>
</comment>